<gene>
    <name evidence="1" type="primary">mukB</name>
    <name type="ordered locus">VV2298</name>
</gene>
<organism>
    <name type="scientific">Vibrio vulnificus (strain YJ016)</name>
    <dbReference type="NCBI Taxonomy" id="196600"/>
    <lineage>
        <taxon>Bacteria</taxon>
        <taxon>Pseudomonadati</taxon>
        <taxon>Pseudomonadota</taxon>
        <taxon>Gammaproteobacteria</taxon>
        <taxon>Vibrionales</taxon>
        <taxon>Vibrionaceae</taxon>
        <taxon>Vibrio</taxon>
    </lineage>
</organism>
<dbReference type="EMBL" id="BA000037">
    <property type="protein sequence ID" value="BAC95062.1"/>
    <property type="molecule type" value="Genomic_DNA"/>
</dbReference>
<dbReference type="RefSeq" id="WP_011150798.1">
    <property type="nucleotide sequence ID" value="NC_005139.1"/>
</dbReference>
<dbReference type="SMR" id="Q7MJ64"/>
<dbReference type="STRING" id="672.VV93_v1c20100"/>
<dbReference type="KEGG" id="vvy:VV2298"/>
<dbReference type="PATRIC" id="fig|196600.6.peg.2309"/>
<dbReference type="eggNOG" id="COG3096">
    <property type="taxonomic scope" value="Bacteria"/>
</dbReference>
<dbReference type="HOGENOM" id="CLU_004430_0_0_6"/>
<dbReference type="Proteomes" id="UP000002675">
    <property type="component" value="Chromosome I"/>
</dbReference>
<dbReference type="GO" id="GO:0005737">
    <property type="term" value="C:cytoplasm"/>
    <property type="evidence" value="ECO:0007669"/>
    <property type="project" value="UniProtKB-UniRule"/>
</dbReference>
<dbReference type="GO" id="GO:0009295">
    <property type="term" value="C:nucleoid"/>
    <property type="evidence" value="ECO:0007669"/>
    <property type="project" value="UniProtKB-SubCell"/>
</dbReference>
<dbReference type="GO" id="GO:0005524">
    <property type="term" value="F:ATP binding"/>
    <property type="evidence" value="ECO:0007669"/>
    <property type="project" value="UniProtKB-UniRule"/>
</dbReference>
<dbReference type="GO" id="GO:0003677">
    <property type="term" value="F:DNA binding"/>
    <property type="evidence" value="ECO:0007669"/>
    <property type="project" value="UniProtKB-UniRule"/>
</dbReference>
<dbReference type="GO" id="GO:0051301">
    <property type="term" value="P:cell division"/>
    <property type="evidence" value="ECO:0007669"/>
    <property type="project" value="UniProtKB-KW"/>
</dbReference>
<dbReference type="GO" id="GO:0030261">
    <property type="term" value="P:chromosome condensation"/>
    <property type="evidence" value="ECO:0007669"/>
    <property type="project" value="UniProtKB-KW"/>
</dbReference>
<dbReference type="GO" id="GO:0007059">
    <property type="term" value="P:chromosome segregation"/>
    <property type="evidence" value="ECO:0007669"/>
    <property type="project" value="UniProtKB-UniRule"/>
</dbReference>
<dbReference type="GO" id="GO:0006260">
    <property type="term" value="P:DNA replication"/>
    <property type="evidence" value="ECO:0007669"/>
    <property type="project" value="UniProtKB-UniRule"/>
</dbReference>
<dbReference type="FunFam" id="3.40.1140.10:FF:000002">
    <property type="entry name" value="Chromosome partition protein MukB"/>
    <property type="match status" value="1"/>
</dbReference>
<dbReference type="Gene3D" id="1.10.287.1490">
    <property type="match status" value="1"/>
</dbReference>
<dbReference type="Gene3D" id="1.20.58.850">
    <property type="match status" value="1"/>
</dbReference>
<dbReference type="Gene3D" id="3.40.1140.10">
    <property type="match status" value="2"/>
</dbReference>
<dbReference type="Gene3D" id="1.20.5.420">
    <property type="entry name" value="Immunoglobulin FC, subunit C"/>
    <property type="match status" value="1"/>
</dbReference>
<dbReference type="Gene3D" id="3.30.70.3500">
    <property type="entry name" value="MukB, hinge domain"/>
    <property type="match status" value="1"/>
</dbReference>
<dbReference type="HAMAP" id="MF_01800">
    <property type="entry name" value="MukB"/>
    <property type="match status" value="1"/>
</dbReference>
<dbReference type="InterPro" id="IPR012090">
    <property type="entry name" value="MukB"/>
</dbReference>
<dbReference type="InterPro" id="IPR050308">
    <property type="entry name" value="MukB/SMC"/>
</dbReference>
<dbReference type="InterPro" id="IPR032520">
    <property type="entry name" value="MukB_hinge"/>
</dbReference>
<dbReference type="InterPro" id="IPR042501">
    <property type="entry name" value="MukB_hinge_sf"/>
</dbReference>
<dbReference type="InterPro" id="IPR007406">
    <property type="entry name" value="MukB_N_dom"/>
</dbReference>
<dbReference type="InterPro" id="IPR027417">
    <property type="entry name" value="P-loop_NTPase"/>
</dbReference>
<dbReference type="NCBIfam" id="NF003422">
    <property type="entry name" value="PRK04863.1"/>
    <property type="match status" value="1"/>
</dbReference>
<dbReference type="PANTHER" id="PTHR42963">
    <property type="entry name" value="CHROMOSOME PARTITION PROTEIN MUKB"/>
    <property type="match status" value="1"/>
</dbReference>
<dbReference type="PANTHER" id="PTHR42963:SF1">
    <property type="entry name" value="DUF4476 DOMAIN-CONTAINING PROTEIN"/>
    <property type="match status" value="1"/>
</dbReference>
<dbReference type="Pfam" id="PF04310">
    <property type="entry name" value="MukB"/>
    <property type="match status" value="1"/>
</dbReference>
<dbReference type="Pfam" id="PF16330">
    <property type="entry name" value="MukB_hinge"/>
    <property type="match status" value="1"/>
</dbReference>
<dbReference type="Pfam" id="PF13558">
    <property type="entry name" value="SbcC_Walker_B"/>
    <property type="match status" value="1"/>
</dbReference>
<dbReference type="PIRSF" id="PIRSF005246">
    <property type="entry name" value="MukB"/>
    <property type="match status" value="1"/>
</dbReference>
<dbReference type="SUPFAM" id="SSF52540">
    <property type="entry name" value="P-loop containing nucleoside triphosphate hydrolases"/>
    <property type="match status" value="1"/>
</dbReference>
<proteinExistence type="inferred from homology"/>
<accession>Q7MJ64</accession>
<sequence>MIERGKYQSLTMVNWNGFFARTFDIDGLVTTLSGGNGAGKSTTMAAFITALIPDQSLLHFRNTTEAGSSQASRDKGLYGKLQPGACYAALDVVNSRNQRLLFAVKLQQVAGRDKKVDIKPFVIQGLPSHVKPTDVLIESVSATQARVRQINEVKESVAQYEGVQFKSFSSIVDYHAQMFEFGVIPKKLRNSSDRSKFYRLIEASLYGGISSAITRSLRDYLLPQNGGVKKAFQDMESALRENRMTLEAIKTTQADRDLFKHLITESTNYVAADYMRHANERHKKLEQSLSLRSELFSSRETLIEQNRLLNQVQQELEMLVESESALEQDYQGASDHLQLVQNALRQQEKIERYQEDLEELNERLEEQSMVVEEAQERVLMAEEQSTVAENEVDSLKTQLADYQQALDVQQTRALQYQQAVQALEKAKVLLSDSTLTAESAQALVAQLTQSEAEQTQALLALKHKLDMSSAAAQQFENALKLVHSIAGQVERAEASRYAKAAIQQARSAQQVVQNENQWRAQHRDLERSLNQQNQAQALVAEYQKAHQVTLDDEVMFEQERERHHAQLDSLEIALEENRELRSEQRRQEQDLQSDITQLQAIAPKWIAANDALEKLREQSGAELADSQSVMSQMQQVLEQEKQLSQAKDKLAERRSQLESEIERLASPGGSNDPRLKGLADTLGGVLLSEIYDDITIDDAPYFSAMYGPARHAIVVSDLSGIEEKLVELDDCPEDLYIIEGDVDAFDDSSIKAEELEGAVCVRLNDRQMRYSRFPVIPLFGRAAREQRLELLRSEREEVVEKHAKAAFDAQKMQRLFQAFNQFVAEHIQVAFAADPEQALVIARDKRNQLTRTLAELEAKEQQMRSQIQNSKQALTMLDKLAPMMAVISDDTIGERFAELEEKIAQLADAKQFLNAHAKAVEQLESQLAVLDADPEQFDALEAQYQSADSQLQALKKQIFALSDLVERRHYFAYADSVDLLSKSSELSEQLKAKLVEAERTRSRYRDELKQQQEQMNQYNQVLASLKSSYQAKLETVQEFKQELAEFGVSADEGALERAIRRRDELHERLHTSRSRKSEYERTLTSTELGMKELAKRLKKVQKEYVELRTFVVAAKAGWCSVLRLARENDVERRLHKRELAYLSAGELRSMSDKSLGALRLAVANNDDLRDALRLSEDNARPERKVLFYIAVYQHLRERIRQDIIHTDDPVEAIEEMEVELARLTEELTMRENRLAISSESVASIIKKTIQREQNRIRMLNQGLSNISFGQVKGVRLNVKVRESHEVLLNGLATQQEQHKDLFETARYTFSEAMAKLFQRVNPHIDMGQRSPQVLGEELLDYRNYLELSIEVNRGSDGWLQAESGALSTGEAIGTGQSILLMVVQSWEEESRRLRSKDIVPCRLLFLDEAARLDAKSISTLFELCDRLDMQLLIAAPENISPEKGTTYKLVRKVFKDHEHVHVVGLRGFGQEQKPKSEAQQMIEEFEA</sequence>
<protein>
    <recommendedName>
        <fullName evidence="1">Chromosome partition protein MukB</fullName>
    </recommendedName>
    <alternativeName>
        <fullName evidence="1">Structural maintenance of chromosome-related protein</fullName>
    </alternativeName>
</protein>
<comment type="function">
    <text evidence="1">Plays a central role in chromosome condensation, segregation and cell cycle progression. Functions as a homodimer, which is essential for chromosome partition. Involved in negative DNA supercoiling in vivo, and by this means organize and compact chromosomes. May achieve or facilitate chromosome segregation by condensation DNA from both sides of a centrally located replisome during cell division.</text>
</comment>
<comment type="subunit">
    <text evidence="1">Homodimerization via its hinge domain. Binds to DNA via its C-terminal region. Interacts, and probably forms a ternary complex, with MukE and MukF via its C-terminal region. The complex formation is stimulated by calcium or magnesium. Interacts with tubulin-related protein FtsZ.</text>
</comment>
<comment type="subcellular location">
    <subcellularLocation>
        <location evidence="1">Cytoplasm</location>
        <location evidence="1">Nucleoid</location>
    </subcellularLocation>
    <text evidence="1">Restricted to the nucleoid region.</text>
</comment>
<comment type="domain">
    <text evidence="1">The hinge domain, which separates the large intramolecular coiled coil regions, allows the homodimerization, forming a V-shaped homodimer.</text>
</comment>
<comment type="similarity">
    <text evidence="1">Belongs to the SMC family. MukB subfamily.</text>
</comment>
<evidence type="ECO:0000255" key="1">
    <source>
        <dbReference type="HAMAP-Rule" id="MF_01800"/>
    </source>
</evidence>
<keyword id="KW-0067">ATP-binding</keyword>
<keyword id="KW-0131">Cell cycle</keyword>
<keyword id="KW-0132">Cell division</keyword>
<keyword id="KW-0159">Chromosome partition</keyword>
<keyword id="KW-0175">Coiled coil</keyword>
<keyword id="KW-0963">Cytoplasm</keyword>
<keyword id="KW-0226">DNA condensation</keyword>
<keyword id="KW-0238">DNA-binding</keyword>
<keyword id="KW-0547">Nucleotide-binding</keyword>
<reference key="1">
    <citation type="journal article" date="2003" name="Genome Res.">
        <title>Comparative genome analysis of Vibrio vulnificus, a marine pathogen.</title>
        <authorList>
            <person name="Chen C.-Y."/>
            <person name="Wu K.-M."/>
            <person name="Chang Y.-C."/>
            <person name="Chang C.-H."/>
            <person name="Tsai H.-C."/>
            <person name="Liao T.-L."/>
            <person name="Liu Y.-M."/>
            <person name="Chen H.-J."/>
            <person name="Shen A.B.-T."/>
            <person name="Li J.-C."/>
            <person name="Su T.-L."/>
            <person name="Shao C.-P."/>
            <person name="Lee C.-T."/>
            <person name="Hor L.-I."/>
            <person name="Tsai S.-F."/>
        </authorList>
    </citation>
    <scope>NUCLEOTIDE SEQUENCE [LARGE SCALE GENOMIC DNA]</scope>
    <source>
        <strain>YJ016</strain>
    </source>
</reference>
<feature type="chain" id="PRO_0000068232" description="Chromosome partition protein MukB">
    <location>
        <begin position="1"/>
        <end position="1487"/>
    </location>
</feature>
<feature type="region of interest" description="Flexible hinge" evidence="1">
    <location>
        <begin position="667"/>
        <end position="784"/>
    </location>
</feature>
<feature type="coiled-coil region" evidence="1">
    <location>
        <begin position="297"/>
        <end position="426"/>
    </location>
</feature>
<feature type="coiled-coil region" evidence="1">
    <location>
        <begin position="460"/>
        <end position="666"/>
    </location>
</feature>
<feature type="coiled-coil region" evidence="1">
    <location>
        <begin position="781"/>
        <end position="806"/>
    </location>
</feature>
<feature type="coiled-coil region" evidence="1">
    <location>
        <begin position="836"/>
        <end position="1111"/>
    </location>
</feature>
<feature type="coiled-coil region" evidence="1">
    <location>
        <begin position="1210"/>
        <end position="1266"/>
    </location>
</feature>
<feature type="binding site" evidence="1">
    <location>
        <begin position="34"/>
        <end position="41"/>
    </location>
    <ligand>
        <name>ATP</name>
        <dbReference type="ChEBI" id="CHEBI:30616"/>
    </ligand>
</feature>
<name>MUKB_VIBVY</name>